<evidence type="ECO:0000255" key="1">
    <source>
        <dbReference type="HAMAP-Rule" id="MF_03193"/>
    </source>
</evidence>
<evidence type="ECO:0000269" key="2">
    <source>
    </source>
</evidence>
<evidence type="ECO:0000269" key="3">
    <source>
    </source>
</evidence>
<keyword id="KW-0274">FAD</keyword>
<keyword id="KW-0285">Flavoprotein</keyword>
<keyword id="KW-0472">Membrane</keyword>
<keyword id="KW-0496">Mitochondrion</keyword>
<keyword id="KW-0999">Mitochondrion inner membrane</keyword>
<keyword id="KW-0503">Monooxygenase</keyword>
<keyword id="KW-0560">Oxidoreductase</keyword>
<keyword id="KW-1185">Reference proteome</keyword>
<keyword id="KW-0831">Ubiquinone biosynthesis</keyword>
<dbReference type="EC" id="1.14.15.45" evidence="1"/>
<dbReference type="EC" id="1.14.15.46" evidence="1"/>
<dbReference type="EMBL" id="CU329671">
    <property type="protein sequence ID" value="CAB46765.2"/>
    <property type="molecule type" value="Genomic_DNA"/>
</dbReference>
<dbReference type="PIR" id="T39426">
    <property type="entry name" value="T39426"/>
</dbReference>
<dbReference type="RefSeq" id="NP_595401.2">
    <property type="nucleotide sequence ID" value="NM_001021308.2"/>
</dbReference>
<dbReference type="SMR" id="Q9Y7Z9"/>
<dbReference type="BioGRID" id="276227">
    <property type="interactions" value="3"/>
</dbReference>
<dbReference type="FunCoup" id="Q9Y7Z9">
    <property type="interactions" value="350"/>
</dbReference>
<dbReference type="STRING" id="284812.Q9Y7Z9"/>
<dbReference type="iPTMnet" id="Q9Y7Z9"/>
<dbReference type="PaxDb" id="4896-SPBC146.12.1"/>
<dbReference type="EnsemblFungi" id="SPBC146.12.1">
    <property type="protein sequence ID" value="SPBC146.12.1:pep"/>
    <property type="gene ID" value="SPBC146.12"/>
</dbReference>
<dbReference type="GeneID" id="2539672"/>
<dbReference type="KEGG" id="spo:2539672"/>
<dbReference type="PomBase" id="SPBC146.12">
    <property type="gene designation" value="coq6"/>
</dbReference>
<dbReference type="VEuPathDB" id="FungiDB:SPBC146.12"/>
<dbReference type="eggNOG" id="KOG3855">
    <property type="taxonomic scope" value="Eukaryota"/>
</dbReference>
<dbReference type="HOGENOM" id="CLU_009665_8_0_1"/>
<dbReference type="InParanoid" id="Q9Y7Z9"/>
<dbReference type="OMA" id="VKQMQVW"/>
<dbReference type="Reactome" id="R-SPO-2142789">
    <property type="pathway name" value="Ubiquinol biosynthesis"/>
</dbReference>
<dbReference type="UniPathway" id="UPA00232"/>
<dbReference type="PRO" id="PR:Q9Y7Z9"/>
<dbReference type="Proteomes" id="UP000002485">
    <property type="component" value="Chromosome II"/>
</dbReference>
<dbReference type="GO" id="GO:0031314">
    <property type="term" value="C:extrinsic component of mitochondrial inner membrane"/>
    <property type="evidence" value="ECO:0007669"/>
    <property type="project" value="UniProtKB-UniRule"/>
</dbReference>
<dbReference type="GO" id="GO:0005739">
    <property type="term" value="C:mitochondrion"/>
    <property type="evidence" value="ECO:0000314"/>
    <property type="project" value="PomBase"/>
</dbReference>
<dbReference type="GO" id="GO:0120538">
    <property type="term" value="F:2-methoxy-6-polyprenolphenol 4-hydroxylase activity"/>
    <property type="evidence" value="ECO:0000266"/>
    <property type="project" value="PomBase"/>
</dbReference>
<dbReference type="GO" id="GO:0106364">
    <property type="term" value="F:4-hydroxy-3-all-trans-polyprenylbenzoate oxygenase activity"/>
    <property type="evidence" value="ECO:0007669"/>
    <property type="project" value="InterPro"/>
</dbReference>
<dbReference type="GO" id="GO:0071949">
    <property type="term" value="F:FAD binding"/>
    <property type="evidence" value="ECO:0007669"/>
    <property type="project" value="InterPro"/>
</dbReference>
<dbReference type="GO" id="GO:0016491">
    <property type="term" value="F:oxidoreductase activity"/>
    <property type="evidence" value="ECO:0000318"/>
    <property type="project" value="GO_Central"/>
</dbReference>
<dbReference type="GO" id="GO:0016712">
    <property type="term" value="F:oxidoreductase activity, acting on paired donors, with incorporation or reduction of molecular oxygen, reduced flavin or flavoprotein as one donor, and incorporation of one atom of oxygen"/>
    <property type="evidence" value="ECO:0007669"/>
    <property type="project" value="UniProtKB-UniRule"/>
</dbReference>
<dbReference type="GO" id="GO:0006744">
    <property type="term" value="P:ubiquinone biosynthetic process"/>
    <property type="evidence" value="ECO:0000315"/>
    <property type="project" value="PomBase"/>
</dbReference>
<dbReference type="FunFam" id="3.50.50.60:FF:000021">
    <property type="entry name" value="Ubiquinone biosynthesis monooxygenase COQ6"/>
    <property type="match status" value="1"/>
</dbReference>
<dbReference type="Gene3D" id="3.50.50.60">
    <property type="entry name" value="FAD/NAD(P)-binding domain"/>
    <property type="match status" value="2"/>
</dbReference>
<dbReference type="HAMAP" id="MF_03193">
    <property type="entry name" value="COQ6_monooxygenase"/>
    <property type="match status" value="1"/>
</dbReference>
<dbReference type="InterPro" id="IPR002938">
    <property type="entry name" value="FAD-bd"/>
</dbReference>
<dbReference type="InterPro" id="IPR036188">
    <property type="entry name" value="FAD/NAD-bd_sf"/>
</dbReference>
<dbReference type="InterPro" id="IPR018168">
    <property type="entry name" value="Ubi_Hdrlase_CS"/>
</dbReference>
<dbReference type="InterPro" id="IPR010971">
    <property type="entry name" value="UbiH/COQ6"/>
</dbReference>
<dbReference type="InterPro" id="IPR051205">
    <property type="entry name" value="UbiH/COQ6_monooxygenase"/>
</dbReference>
<dbReference type="InterPro" id="IPR000689">
    <property type="entry name" value="UbQ_mOase_COQ6"/>
</dbReference>
<dbReference type="NCBIfam" id="TIGR01989">
    <property type="entry name" value="COQ6"/>
    <property type="match status" value="1"/>
</dbReference>
<dbReference type="NCBIfam" id="TIGR01988">
    <property type="entry name" value="Ubi-OHases"/>
    <property type="match status" value="1"/>
</dbReference>
<dbReference type="PANTHER" id="PTHR43876">
    <property type="entry name" value="UBIQUINONE BIOSYNTHESIS MONOOXYGENASE COQ6, MITOCHONDRIAL"/>
    <property type="match status" value="1"/>
</dbReference>
<dbReference type="PANTHER" id="PTHR43876:SF7">
    <property type="entry name" value="UBIQUINONE BIOSYNTHESIS MONOOXYGENASE COQ6, MITOCHONDRIAL"/>
    <property type="match status" value="1"/>
</dbReference>
<dbReference type="Pfam" id="PF01494">
    <property type="entry name" value="FAD_binding_3"/>
    <property type="match status" value="1"/>
</dbReference>
<dbReference type="PRINTS" id="PR00420">
    <property type="entry name" value="RNGMNOXGNASE"/>
</dbReference>
<dbReference type="SUPFAM" id="SSF51905">
    <property type="entry name" value="FAD/NAD(P)-binding domain"/>
    <property type="match status" value="1"/>
</dbReference>
<dbReference type="PROSITE" id="PS01304">
    <property type="entry name" value="UBIH"/>
    <property type="match status" value="1"/>
</dbReference>
<organism>
    <name type="scientific">Schizosaccharomyces pombe (strain 972 / ATCC 24843)</name>
    <name type="common">Fission yeast</name>
    <dbReference type="NCBI Taxonomy" id="284812"/>
    <lineage>
        <taxon>Eukaryota</taxon>
        <taxon>Fungi</taxon>
        <taxon>Dikarya</taxon>
        <taxon>Ascomycota</taxon>
        <taxon>Taphrinomycotina</taxon>
        <taxon>Schizosaccharomycetes</taxon>
        <taxon>Schizosaccharomycetales</taxon>
        <taxon>Schizosaccharomycetaceae</taxon>
        <taxon>Schizosaccharomyces</taxon>
    </lineage>
</organism>
<feature type="chain" id="PRO_0000207582" description="Ubiquinone biosynthesis monooxygenase COQ6, mitochondrial">
    <location>
        <begin position="1"/>
        <end position="479"/>
    </location>
</feature>
<proteinExistence type="inferred from homology"/>
<accession>Q9Y7Z9</accession>
<gene>
    <name evidence="1" type="primary">coq6</name>
    <name type="ORF">SPBC146.12</name>
</gene>
<protein>
    <recommendedName>
        <fullName evidence="1">Ubiquinone biosynthesis monooxygenase COQ6, mitochondrial</fullName>
        <ecNumber evidence="1">1.14.15.45</ecNumber>
    </recommendedName>
    <alternativeName>
        <fullName evidence="1">2-methoxy-6-polyprenolphenol 4-hydroxylase</fullName>
        <ecNumber evidence="1">1.14.15.46</ecNumber>
    </alternativeName>
</protein>
<sequence>MSSLVLRGVSRVEMPTISPTLGIYTRKFASQKILQRQFDVVIVGSGPVGLALAAGLQSNPVTQSLKVGLLDIQDTMKLKDWKFETYSNRCSSLTNHTRMFFDKIGAWDFARKDRIQPFQHILASDGLTNSSIHLDQKPGSEPMAFMSENVNLQYALLNSIIDKMNNNIKKPNLEFLMPCTITKLSKGENIYRTHIHTTTHGELTTKLLIGADGRNSIVRKYANISMPGWNYLTHAVVGTLKIDPLKGPAVAFQRFLPTGPLAYLPLPDNNATFVWSTRPHIASKLLRLPEETFVKFLNASFRLDYPDLSYLYQMDFSEPSKVNEQLDWRLQVKRNSNMQVPPVITEIVSGSRAAFPLRLAHVDEYVKEGIALCGDAAHNTHPLAGQGLNTGIQDVESLISALSFAIKHGQDIGSVFSLQPYFRDRYFKNHVYLGVVDKFHKLYAMENPVVTSVRTLGLSLFDRSASLKNFILSTVANGI</sequence>
<reference key="1">
    <citation type="journal article" date="2002" name="Nature">
        <title>The genome sequence of Schizosaccharomyces pombe.</title>
        <authorList>
            <person name="Wood V."/>
            <person name="Gwilliam R."/>
            <person name="Rajandream M.A."/>
            <person name="Lyne M.H."/>
            <person name="Lyne R."/>
            <person name="Stewart A."/>
            <person name="Sgouros J.G."/>
            <person name="Peat N."/>
            <person name="Hayles J."/>
            <person name="Baker S.G."/>
            <person name="Basham D."/>
            <person name="Bowman S."/>
            <person name="Brooks K."/>
            <person name="Brown D."/>
            <person name="Brown S."/>
            <person name="Chillingworth T."/>
            <person name="Churcher C.M."/>
            <person name="Collins M."/>
            <person name="Connor R."/>
            <person name="Cronin A."/>
            <person name="Davis P."/>
            <person name="Feltwell T."/>
            <person name="Fraser A."/>
            <person name="Gentles S."/>
            <person name="Goble A."/>
            <person name="Hamlin N."/>
            <person name="Harris D.E."/>
            <person name="Hidalgo J."/>
            <person name="Hodgson G."/>
            <person name="Holroyd S."/>
            <person name="Hornsby T."/>
            <person name="Howarth S."/>
            <person name="Huckle E.J."/>
            <person name="Hunt S."/>
            <person name="Jagels K."/>
            <person name="James K.D."/>
            <person name="Jones L."/>
            <person name="Jones M."/>
            <person name="Leather S."/>
            <person name="McDonald S."/>
            <person name="McLean J."/>
            <person name="Mooney P."/>
            <person name="Moule S."/>
            <person name="Mungall K.L."/>
            <person name="Murphy L.D."/>
            <person name="Niblett D."/>
            <person name="Odell C."/>
            <person name="Oliver K."/>
            <person name="O'Neil S."/>
            <person name="Pearson D."/>
            <person name="Quail M.A."/>
            <person name="Rabbinowitsch E."/>
            <person name="Rutherford K.M."/>
            <person name="Rutter S."/>
            <person name="Saunders D."/>
            <person name="Seeger K."/>
            <person name="Sharp S."/>
            <person name="Skelton J."/>
            <person name="Simmonds M.N."/>
            <person name="Squares R."/>
            <person name="Squares S."/>
            <person name="Stevens K."/>
            <person name="Taylor K."/>
            <person name="Taylor R.G."/>
            <person name="Tivey A."/>
            <person name="Walsh S.V."/>
            <person name="Warren T."/>
            <person name="Whitehead S."/>
            <person name="Woodward J.R."/>
            <person name="Volckaert G."/>
            <person name="Aert R."/>
            <person name="Robben J."/>
            <person name="Grymonprez B."/>
            <person name="Weltjens I."/>
            <person name="Vanstreels E."/>
            <person name="Rieger M."/>
            <person name="Schaefer M."/>
            <person name="Mueller-Auer S."/>
            <person name="Gabel C."/>
            <person name="Fuchs M."/>
            <person name="Duesterhoeft A."/>
            <person name="Fritzc C."/>
            <person name="Holzer E."/>
            <person name="Moestl D."/>
            <person name="Hilbert H."/>
            <person name="Borzym K."/>
            <person name="Langer I."/>
            <person name="Beck A."/>
            <person name="Lehrach H."/>
            <person name="Reinhardt R."/>
            <person name="Pohl T.M."/>
            <person name="Eger P."/>
            <person name="Zimmermann W."/>
            <person name="Wedler H."/>
            <person name="Wambutt R."/>
            <person name="Purnelle B."/>
            <person name="Goffeau A."/>
            <person name="Cadieu E."/>
            <person name="Dreano S."/>
            <person name="Gloux S."/>
            <person name="Lelaure V."/>
            <person name="Mottier S."/>
            <person name="Galibert F."/>
            <person name="Aves S.J."/>
            <person name="Xiang Z."/>
            <person name="Hunt C."/>
            <person name="Moore K."/>
            <person name="Hurst S.M."/>
            <person name="Lucas M."/>
            <person name="Rochet M."/>
            <person name="Gaillardin C."/>
            <person name="Tallada V.A."/>
            <person name="Garzon A."/>
            <person name="Thode G."/>
            <person name="Daga R.R."/>
            <person name="Cruzado L."/>
            <person name="Jimenez J."/>
            <person name="Sanchez M."/>
            <person name="del Rey F."/>
            <person name="Benito J."/>
            <person name="Dominguez A."/>
            <person name="Revuelta J.L."/>
            <person name="Moreno S."/>
            <person name="Armstrong J."/>
            <person name="Forsburg S.L."/>
            <person name="Cerutti L."/>
            <person name="Lowe T."/>
            <person name="McCombie W.R."/>
            <person name="Paulsen I."/>
            <person name="Potashkin J."/>
            <person name="Shpakovski G.V."/>
            <person name="Ussery D."/>
            <person name="Barrell B.G."/>
            <person name="Nurse P."/>
        </authorList>
    </citation>
    <scope>NUCLEOTIDE SEQUENCE [LARGE SCALE GENOMIC DNA]</scope>
    <source>
        <strain>972 / ATCC 24843</strain>
    </source>
</reference>
<reference key="2">
    <citation type="journal article" date="2011" name="Science">
        <title>Comparative functional genomics of the fission yeasts.</title>
        <authorList>
            <person name="Rhind N."/>
            <person name="Chen Z."/>
            <person name="Yassour M."/>
            <person name="Thompson D.A."/>
            <person name="Haas B.J."/>
            <person name="Habib N."/>
            <person name="Wapinski I."/>
            <person name="Roy S."/>
            <person name="Lin M.F."/>
            <person name="Heiman D.I."/>
            <person name="Young S.K."/>
            <person name="Furuya K."/>
            <person name="Guo Y."/>
            <person name="Pidoux A."/>
            <person name="Chen H.M."/>
            <person name="Robbertse B."/>
            <person name="Goldberg J.M."/>
            <person name="Aoki K."/>
            <person name="Bayne E.H."/>
            <person name="Berlin A.M."/>
            <person name="Desjardins C.A."/>
            <person name="Dobbs E."/>
            <person name="Dukaj L."/>
            <person name="Fan L."/>
            <person name="FitzGerald M.G."/>
            <person name="French C."/>
            <person name="Gujja S."/>
            <person name="Hansen K."/>
            <person name="Keifenheim D."/>
            <person name="Levin J.Z."/>
            <person name="Mosher R.A."/>
            <person name="Mueller C.A."/>
            <person name="Pfiffner J."/>
            <person name="Priest M."/>
            <person name="Russ C."/>
            <person name="Smialowska A."/>
            <person name="Swoboda P."/>
            <person name="Sykes S.M."/>
            <person name="Vaughn M."/>
            <person name="Vengrova S."/>
            <person name="Yoder R."/>
            <person name="Zeng Q."/>
            <person name="Allshire R."/>
            <person name="Baulcombe D."/>
            <person name="Birren B.W."/>
            <person name="Brown W."/>
            <person name="Ekwall K."/>
            <person name="Kellis M."/>
            <person name="Leatherwood J."/>
            <person name="Levin H."/>
            <person name="Margalit H."/>
            <person name="Martienssen R."/>
            <person name="Nieduszynski C.A."/>
            <person name="Spatafora J.W."/>
            <person name="Friedman N."/>
            <person name="Dalgaard J.Z."/>
            <person name="Baumann P."/>
            <person name="Niki H."/>
            <person name="Regev A."/>
            <person name="Nusbaum C."/>
        </authorList>
    </citation>
    <scope>REVISION OF GENE MODEL</scope>
</reference>
<reference key="3">
    <citation type="journal article" date="2006" name="Nat. Biotechnol.">
        <title>ORFeome cloning and global analysis of protein localization in the fission yeast Schizosaccharomyces pombe.</title>
        <authorList>
            <person name="Matsuyama A."/>
            <person name="Arai R."/>
            <person name="Yashiroda Y."/>
            <person name="Shirai A."/>
            <person name="Kamata A."/>
            <person name="Sekido S."/>
            <person name="Kobayashi Y."/>
            <person name="Hashimoto A."/>
            <person name="Hamamoto M."/>
            <person name="Hiraoka Y."/>
            <person name="Horinouchi S."/>
            <person name="Yoshida M."/>
        </authorList>
    </citation>
    <scope>SUBCELLULAR LOCATION [LARGE SCALE ANALYSIS]</scope>
</reference>
<reference key="4">
    <citation type="journal article" date="2014" name="PLoS ONE">
        <title>Functional conservation of coenzyme Q biosynthetic genes among yeasts, plants, and humans.</title>
        <authorList>
            <person name="Hayashi K."/>
            <person name="Ogiyama Y."/>
            <person name="Yokomi K."/>
            <person name="Nakagawa T."/>
            <person name="Kaino T."/>
            <person name="Kawamukai M."/>
        </authorList>
    </citation>
    <scope>SUBCELLULAR LOCATION</scope>
    <scope>PATHWAY</scope>
</reference>
<comment type="function">
    <text evidence="1">FAD-dependent monooxygenase required for two non-consecutive steps during ubiquinone biosynthesis. Required for the C5-ring hydroxylation during ubiquinone biosynthesis by catalyzing the hydroxylation of 4-hydroxy-3-(all-trans-decaprenyl)benzoic acid to 3,4-dihydroxy-5-(all-trans-decaprenyl)benzoic acid. Also acts downstream of COQ4, for the C1-hydroxylation during ubiquinone biosynthesis by catalyzing the hydroxylation of 2-methoxy-6-(all-trans-decaprenyl)phenol to 2-methoxy-6-(all-trans-decaprenyl)benzene-1,4-diol. The electrons required for the hydroxylation reaction are funneled indirectly to coq6 from NADPH via a ferredoxin/ferredoxin reductase system.</text>
</comment>
<comment type="catalytic activity">
    <reaction evidence="1">
        <text>4-hydroxy-3-(all-trans-decaprenyl)benzoate + 2 reduced [2Fe-2S]-[ferredoxin] + O2 + 2 H(+) = 3,4-dihydroxy-5-(all-trans-decaprenyl)benzoate + 2 oxidized [2Fe-2S]-[ferredoxin] + H2O</text>
        <dbReference type="Rhea" id="RHEA:81259"/>
        <dbReference type="Rhea" id="RHEA-COMP:10000"/>
        <dbReference type="Rhea" id="RHEA-COMP:10001"/>
        <dbReference type="ChEBI" id="CHEBI:15377"/>
        <dbReference type="ChEBI" id="CHEBI:15378"/>
        <dbReference type="ChEBI" id="CHEBI:15379"/>
        <dbReference type="ChEBI" id="CHEBI:33737"/>
        <dbReference type="ChEBI" id="CHEBI:33738"/>
        <dbReference type="ChEBI" id="CHEBI:62793"/>
        <dbReference type="ChEBI" id="CHEBI:84503"/>
        <dbReference type="EC" id="1.14.15.45"/>
    </reaction>
</comment>
<comment type="catalytic activity">
    <reaction evidence="1">
        <text>2-methoxy-6-(all-trans-decaprenyl)phenol + 2 reduced [2Fe-2S]-[ferredoxin] + O2 + 2 H(+) = 2-methoxy-6-(all-trans-decaprenyl)benzene-1,4-diol + 2 oxidized [2Fe-2S]-[ferredoxin] + H2O</text>
        <dbReference type="Rhea" id="RHEA:81295"/>
        <dbReference type="Rhea" id="RHEA-COMP:10000"/>
        <dbReference type="Rhea" id="RHEA-COMP:10001"/>
        <dbReference type="ChEBI" id="CHEBI:15377"/>
        <dbReference type="ChEBI" id="CHEBI:15378"/>
        <dbReference type="ChEBI" id="CHEBI:15379"/>
        <dbReference type="ChEBI" id="CHEBI:33737"/>
        <dbReference type="ChEBI" id="CHEBI:33738"/>
        <dbReference type="ChEBI" id="CHEBI:50774"/>
        <dbReference type="ChEBI" id="CHEBI:64180"/>
        <dbReference type="EC" id="1.14.15.46"/>
    </reaction>
</comment>
<comment type="cofactor">
    <cofactor evidence="1">
        <name>FAD</name>
        <dbReference type="ChEBI" id="CHEBI:57692"/>
    </cofactor>
</comment>
<comment type="pathway">
    <text evidence="1 3">Cofactor biosynthesis; ubiquinone biosynthesis.</text>
</comment>
<comment type="subunit">
    <text evidence="1">Component of a multi-subunit COQ enzyme complex, composed of at least COQ3, COQ4, COQ5, COQ6, COQ7 and COQ9.</text>
</comment>
<comment type="subcellular location">
    <subcellularLocation>
        <location evidence="1 2 3">Mitochondrion inner membrane</location>
        <topology evidence="1">Peripheral membrane protein</topology>
        <orientation evidence="1">Matrix side</orientation>
    </subcellularLocation>
</comment>
<comment type="miscellaneous">
    <text evidence="1">This protein may be expected to contain an N-terminal transit peptide but none has been predicted.</text>
</comment>
<comment type="similarity">
    <text evidence="1">Belongs to the UbiH/COQ6 family.</text>
</comment>
<name>COQ6_SCHPO</name>